<dbReference type="EMBL" id="D78193">
    <property type="protein sequence ID" value="BAA11286.1"/>
    <property type="molecule type" value="Genomic_DNA"/>
</dbReference>
<dbReference type="EMBL" id="AL009126">
    <property type="protein sequence ID" value="CAB16064.2"/>
    <property type="molecule type" value="Genomic_DNA"/>
</dbReference>
<dbReference type="PIR" id="D70090">
    <property type="entry name" value="D70090"/>
</dbReference>
<dbReference type="RefSeq" id="NP_391907.2">
    <property type="nucleotide sequence ID" value="NC_000964.3"/>
</dbReference>
<dbReference type="RefSeq" id="WP_003243905.1">
    <property type="nucleotide sequence ID" value="NZ_OZ025638.1"/>
</dbReference>
<dbReference type="FunCoup" id="Q45606">
    <property type="interactions" value="41"/>
</dbReference>
<dbReference type="STRING" id="224308.BSU40270"/>
<dbReference type="PaxDb" id="224308-BSU40270"/>
<dbReference type="EnsemblBacteria" id="CAB16064">
    <property type="protein sequence ID" value="CAB16064"/>
    <property type="gene ID" value="BSU_40270"/>
</dbReference>
<dbReference type="GeneID" id="937764"/>
<dbReference type="KEGG" id="bsu:BSU40270"/>
<dbReference type="PATRIC" id="fig|224308.179.peg.4357"/>
<dbReference type="eggNOG" id="ENOG5032Z9Z">
    <property type="taxonomic scope" value="Bacteria"/>
</dbReference>
<dbReference type="InParanoid" id="Q45606"/>
<dbReference type="OrthoDB" id="2573204at2"/>
<dbReference type="BioCyc" id="BSUB:BSU40270-MONOMER"/>
<dbReference type="Proteomes" id="UP000001570">
    <property type="component" value="Chromosome"/>
</dbReference>
<dbReference type="Gene3D" id="2.130.10.10">
    <property type="entry name" value="YVTN repeat-like/Quinoprotein amine dehydrogenase"/>
    <property type="match status" value="1"/>
</dbReference>
<dbReference type="InterPro" id="IPR011047">
    <property type="entry name" value="Quinoprotein_ADH-like_sf"/>
</dbReference>
<dbReference type="InterPro" id="IPR015943">
    <property type="entry name" value="WD40/YVTN_repeat-like_dom_sf"/>
</dbReference>
<dbReference type="SUPFAM" id="SSF50998">
    <property type="entry name" value="Quinoprotein alcohol dehydrogenase-like"/>
    <property type="match status" value="1"/>
</dbReference>
<feature type="signal peptide" evidence="1">
    <location>
        <begin position="1"/>
        <end position="27"/>
    </location>
</feature>
<feature type="chain" id="PRO_0000013748" description="Uncharacterized protein YycP">
    <location>
        <begin position="28"/>
        <end position="387"/>
    </location>
</feature>
<feature type="sequence conflict" description="In Ref. 1; BAA11286." evidence="2" ref="1">
    <original>S</original>
    <variation>N</variation>
    <location>
        <position position="65"/>
    </location>
</feature>
<gene>
    <name type="primary">yycP</name>
    <name type="ordered locus">BSU40270</name>
</gene>
<reference key="1">
    <citation type="journal article" date="1997" name="DNA Res.">
        <title>Sequence analysis of the 36-kb region between gntZ and trnY genes of Bacillus subtilis genome.</title>
        <authorList>
            <person name="Kasahara Y."/>
            <person name="Nakai S."/>
            <person name="Ogasawara N."/>
        </authorList>
    </citation>
    <scope>NUCLEOTIDE SEQUENCE [GENOMIC DNA]</scope>
    <source>
        <strain>168</strain>
    </source>
</reference>
<reference key="2">
    <citation type="journal article" date="1997" name="Nature">
        <title>The complete genome sequence of the Gram-positive bacterium Bacillus subtilis.</title>
        <authorList>
            <person name="Kunst F."/>
            <person name="Ogasawara N."/>
            <person name="Moszer I."/>
            <person name="Albertini A.M."/>
            <person name="Alloni G."/>
            <person name="Azevedo V."/>
            <person name="Bertero M.G."/>
            <person name="Bessieres P."/>
            <person name="Bolotin A."/>
            <person name="Borchert S."/>
            <person name="Borriss R."/>
            <person name="Boursier L."/>
            <person name="Brans A."/>
            <person name="Braun M."/>
            <person name="Brignell S.C."/>
            <person name="Bron S."/>
            <person name="Brouillet S."/>
            <person name="Bruschi C.V."/>
            <person name="Caldwell B."/>
            <person name="Capuano V."/>
            <person name="Carter N.M."/>
            <person name="Choi S.-K."/>
            <person name="Codani J.-J."/>
            <person name="Connerton I.F."/>
            <person name="Cummings N.J."/>
            <person name="Daniel R.A."/>
            <person name="Denizot F."/>
            <person name="Devine K.M."/>
            <person name="Duesterhoeft A."/>
            <person name="Ehrlich S.D."/>
            <person name="Emmerson P.T."/>
            <person name="Entian K.-D."/>
            <person name="Errington J."/>
            <person name="Fabret C."/>
            <person name="Ferrari E."/>
            <person name="Foulger D."/>
            <person name="Fritz C."/>
            <person name="Fujita M."/>
            <person name="Fujita Y."/>
            <person name="Fuma S."/>
            <person name="Galizzi A."/>
            <person name="Galleron N."/>
            <person name="Ghim S.-Y."/>
            <person name="Glaser P."/>
            <person name="Goffeau A."/>
            <person name="Golightly E.J."/>
            <person name="Grandi G."/>
            <person name="Guiseppi G."/>
            <person name="Guy B.J."/>
            <person name="Haga K."/>
            <person name="Haiech J."/>
            <person name="Harwood C.R."/>
            <person name="Henaut A."/>
            <person name="Hilbert H."/>
            <person name="Holsappel S."/>
            <person name="Hosono S."/>
            <person name="Hullo M.-F."/>
            <person name="Itaya M."/>
            <person name="Jones L.-M."/>
            <person name="Joris B."/>
            <person name="Karamata D."/>
            <person name="Kasahara Y."/>
            <person name="Klaerr-Blanchard M."/>
            <person name="Klein C."/>
            <person name="Kobayashi Y."/>
            <person name="Koetter P."/>
            <person name="Koningstein G."/>
            <person name="Krogh S."/>
            <person name="Kumano M."/>
            <person name="Kurita K."/>
            <person name="Lapidus A."/>
            <person name="Lardinois S."/>
            <person name="Lauber J."/>
            <person name="Lazarevic V."/>
            <person name="Lee S.-M."/>
            <person name="Levine A."/>
            <person name="Liu H."/>
            <person name="Masuda S."/>
            <person name="Mauel C."/>
            <person name="Medigue C."/>
            <person name="Medina N."/>
            <person name="Mellado R.P."/>
            <person name="Mizuno M."/>
            <person name="Moestl D."/>
            <person name="Nakai S."/>
            <person name="Noback M."/>
            <person name="Noone D."/>
            <person name="O'Reilly M."/>
            <person name="Ogawa K."/>
            <person name="Ogiwara A."/>
            <person name="Oudega B."/>
            <person name="Park S.-H."/>
            <person name="Parro V."/>
            <person name="Pohl T.M."/>
            <person name="Portetelle D."/>
            <person name="Porwollik S."/>
            <person name="Prescott A.M."/>
            <person name="Presecan E."/>
            <person name="Pujic P."/>
            <person name="Purnelle B."/>
            <person name="Rapoport G."/>
            <person name="Rey M."/>
            <person name="Reynolds S."/>
            <person name="Rieger M."/>
            <person name="Rivolta C."/>
            <person name="Rocha E."/>
            <person name="Roche B."/>
            <person name="Rose M."/>
            <person name="Sadaie Y."/>
            <person name="Sato T."/>
            <person name="Scanlan E."/>
            <person name="Schleich S."/>
            <person name="Schroeter R."/>
            <person name="Scoffone F."/>
            <person name="Sekiguchi J."/>
            <person name="Sekowska A."/>
            <person name="Seror S.J."/>
            <person name="Serror P."/>
            <person name="Shin B.-S."/>
            <person name="Soldo B."/>
            <person name="Sorokin A."/>
            <person name="Tacconi E."/>
            <person name="Takagi T."/>
            <person name="Takahashi H."/>
            <person name="Takemaru K."/>
            <person name="Takeuchi M."/>
            <person name="Tamakoshi A."/>
            <person name="Tanaka T."/>
            <person name="Terpstra P."/>
            <person name="Tognoni A."/>
            <person name="Tosato V."/>
            <person name="Uchiyama S."/>
            <person name="Vandenbol M."/>
            <person name="Vannier F."/>
            <person name="Vassarotti A."/>
            <person name="Viari A."/>
            <person name="Wambutt R."/>
            <person name="Wedler E."/>
            <person name="Wedler H."/>
            <person name="Weitzenegger T."/>
            <person name="Winters P."/>
            <person name="Wipat A."/>
            <person name="Yamamoto H."/>
            <person name="Yamane K."/>
            <person name="Yasumoto K."/>
            <person name="Yata K."/>
            <person name="Yoshida K."/>
            <person name="Yoshikawa H.-F."/>
            <person name="Zumstein E."/>
            <person name="Yoshikawa H."/>
            <person name="Danchin A."/>
        </authorList>
    </citation>
    <scope>NUCLEOTIDE SEQUENCE [LARGE SCALE GENOMIC DNA]</scope>
    <source>
        <strain>168</strain>
    </source>
</reference>
<reference key="3">
    <citation type="journal article" date="2009" name="Microbiology">
        <title>From a consortium sequence to a unified sequence: the Bacillus subtilis 168 reference genome a decade later.</title>
        <authorList>
            <person name="Barbe V."/>
            <person name="Cruveiller S."/>
            <person name="Kunst F."/>
            <person name="Lenoble P."/>
            <person name="Meurice G."/>
            <person name="Sekowska A."/>
            <person name="Vallenet D."/>
            <person name="Wang T."/>
            <person name="Moszer I."/>
            <person name="Medigue C."/>
            <person name="Danchin A."/>
        </authorList>
    </citation>
    <scope>SEQUENCE REVISION TO 65</scope>
</reference>
<organism>
    <name type="scientific">Bacillus subtilis (strain 168)</name>
    <dbReference type="NCBI Taxonomy" id="224308"/>
    <lineage>
        <taxon>Bacteria</taxon>
        <taxon>Bacillati</taxon>
        <taxon>Bacillota</taxon>
        <taxon>Bacilli</taxon>
        <taxon>Bacillales</taxon>
        <taxon>Bacillaceae</taxon>
        <taxon>Bacillus</taxon>
    </lineage>
</organism>
<proteinExistence type="inferred from homology"/>
<name>YYCP_BACSU</name>
<evidence type="ECO:0000255" key="1"/>
<evidence type="ECO:0000305" key="2"/>
<keyword id="KW-1185">Reference proteome</keyword>
<keyword id="KW-0732">Signal</keyword>
<sequence>MKKWMITIAMLILAGIALFVFISPLKSHKTVSQQDLRNPDFLDDKEVLLYFSSSADQDAFGGGKSYALFISHDGTLSSFQMKGLELGSAKVHGDSVMLEDKNTIYTIKNGLRSHKRTYQHTGDSAGFLQNTDGFYTLYNSGYDKKGDGYRSELYRQMDGEWKKDVIPYYIRASGFHDGAIYALVPTDDGKGYQLLQIQADQKKLTYLSITEWQYREGASVESQLAVDDQAVYVMVRGQKAHDLYQMVKINKKSGEVELHDIAEYKNDEQTIYSSMPFSFKNSFFPYDGNLYFIDGFGKVHKIDAKTGKTSIVFTLSPDKMKAEFKEITQKGSSLYFFTYTYHKPAYIEQYSLKTGKKMKEKEIGKVKDVVTPKSHLKLYDVEVMKRF</sequence>
<protein>
    <recommendedName>
        <fullName>Uncharacterized protein YycP</fullName>
    </recommendedName>
</protein>
<accession>Q45606</accession>